<gene>
    <name evidence="1" type="primary">hmuV</name>
    <name type="ordered locus">RPE_3155</name>
</gene>
<comment type="function">
    <text evidence="1">Part of the ABC transporter complex HmuTUV involved in hemin import. Responsible for energy coupling to the transport system.</text>
</comment>
<comment type="subunit">
    <text evidence="1">The complex is composed of two ATP-binding proteins (HmuV), two transmembrane proteins (HmuU) and a solute-binding protein (HmuT).</text>
</comment>
<comment type="subcellular location">
    <subcellularLocation>
        <location evidence="1">Cell inner membrane</location>
        <topology evidence="1">Peripheral membrane protein</topology>
    </subcellularLocation>
</comment>
<comment type="similarity">
    <text evidence="1">Belongs to the ABC transporter superfamily. Heme (hemin) importer (TC 3.A.1.14.5) family.</text>
</comment>
<reference key="1">
    <citation type="submission" date="2006-09" db="EMBL/GenBank/DDBJ databases">
        <title>Complete sequence of Rhodopseudomonas palustris BisA53.</title>
        <authorList>
            <consortium name="US DOE Joint Genome Institute"/>
            <person name="Copeland A."/>
            <person name="Lucas S."/>
            <person name="Lapidus A."/>
            <person name="Barry K."/>
            <person name="Detter J.C."/>
            <person name="Glavina del Rio T."/>
            <person name="Hammon N."/>
            <person name="Israni S."/>
            <person name="Dalin E."/>
            <person name="Tice H."/>
            <person name="Pitluck S."/>
            <person name="Chain P."/>
            <person name="Malfatti S."/>
            <person name="Shin M."/>
            <person name="Vergez L."/>
            <person name="Schmutz J."/>
            <person name="Larimer F."/>
            <person name="Land M."/>
            <person name="Hauser L."/>
            <person name="Pelletier D.A."/>
            <person name="Kyrpides N."/>
            <person name="Kim E."/>
            <person name="Harwood C.S."/>
            <person name="Oda Y."/>
            <person name="Richardson P."/>
        </authorList>
    </citation>
    <scope>NUCLEOTIDE SEQUENCE [LARGE SCALE GENOMIC DNA]</scope>
    <source>
        <strain>BisA53</strain>
    </source>
</reference>
<dbReference type="EC" id="7.6.2.-" evidence="1"/>
<dbReference type="EMBL" id="CP000463">
    <property type="protein sequence ID" value="ABJ07091.1"/>
    <property type="molecule type" value="Genomic_DNA"/>
</dbReference>
<dbReference type="SMR" id="Q07LU3"/>
<dbReference type="STRING" id="316055.RPE_3155"/>
<dbReference type="KEGG" id="rpe:RPE_3155"/>
<dbReference type="eggNOG" id="COG4559">
    <property type="taxonomic scope" value="Bacteria"/>
</dbReference>
<dbReference type="HOGENOM" id="CLU_000604_1_11_5"/>
<dbReference type="OrthoDB" id="9810077at2"/>
<dbReference type="GO" id="GO:0005886">
    <property type="term" value="C:plasma membrane"/>
    <property type="evidence" value="ECO:0007669"/>
    <property type="project" value="UniProtKB-SubCell"/>
</dbReference>
<dbReference type="GO" id="GO:0005524">
    <property type="term" value="F:ATP binding"/>
    <property type="evidence" value="ECO:0007669"/>
    <property type="project" value="UniProtKB-KW"/>
</dbReference>
<dbReference type="GO" id="GO:0016887">
    <property type="term" value="F:ATP hydrolysis activity"/>
    <property type="evidence" value="ECO:0007669"/>
    <property type="project" value="InterPro"/>
</dbReference>
<dbReference type="CDD" id="cd03214">
    <property type="entry name" value="ABC_Iron-Siderophores_B12_Hemin"/>
    <property type="match status" value="1"/>
</dbReference>
<dbReference type="Gene3D" id="3.40.50.300">
    <property type="entry name" value="P-loop containing nucleotide triphosphate hydrolases"/>
    <property type="match status" value="1"/>
</dbReference>
<dbReference type="InterPro" id="IPR003593">
    <property type="entry name" value="AAA+_ATPase"/>
</dbReference>
<dbReference type="InterPro" id="IPR003439">
    <property type="entry name" value="ABC_transporter-like_ATP-bd"/>
</dbReference>
<dbReference type="InterPro" id="IPR027417">
    <property type="entry name" value="P-loop_NTPase"/>
</dbReference>
<dbReference type="NCBIfam" id="NF010068">
    <property type="entry name" value="PRK13548.1"/>
    <property type="match status" value="1"/>
</dbReference>
<dbReference type="PANTHER" id="PTHR42794">
    <property type="entry name" value="HEMIN IMPORT ATP-BINDING PROTEIN HMUV"/>
    <property type="match status" value="1"/>
</dbReference>
<dbReference type="PANTHER" id="PTHR42794:SF1">
    <property type="entry name" value="HEMIN IMPORT ATP-BINDING PROTEIN HMUV"/>
    <property type="match status" value="1"/>
</dbReference>
<dbReference type="Pfam" id="PF00005">
    <property type="entry name" value="ABC_tran"/>
    <property type="match status" value="1"/>
</dbReference>
<dbReference type="SMART" id="SM00382">
    <property type="entry name" value="AAA"/>
    <property type="match status" value="1"/>
</dbReference>
<dbReference type="SUPFAM" id="SSF52540">
    <property type="entry name" value="P-loop containing nucleoside triphosphate hydrolases"/>
    <property type="match status" value="1"/>
</dbReference>
<dbReference type="PROSITE" id="PS50893">
    <property type="entry name" value="ABC_TRANSPORTER_2"/>
    <property type="match status" value="1"/>
</dbReference>
<dbReference type="PROSITE" id="PS51261">
    <property type="entry name" value="HMUV"/>
    <property type="match status" value="1"/>
</dbReference>
<proteinExistence type="inferred from homology"/>
<organism>
    <name type="scientific">Rhodopseudomonas palustris (strain BisA53)</name>
    <dbReference type="NCBI Taxonomy" id="316055"/>
    <lineage>
        <taxon>Bacteria</taxon>
        <taxon>Pseudomonadati</taxon>
        <taxon>Pseudomonadota</taxon>
        <taxon>Alphaproteobacteria</taxon>
        <taxon>Hyphomicrobiales</taxon>
        <taxon>Nitrobacteraceae</taxon>
        <taxon>Rhodopseudomonas</taxon>
    </lineage>
</organism>
<name>HMUV_RHOP5</name>
<accession>Q07LU3</accession>
<feature type="chain" id="PRO_0000277705" description="Hemin import ATP-binding protein HmuV">
    <location>
        <begin position="1"/>
        <end position="270"/>
    </location>
</feature>
<feature type="domain" description="ABC transporter" evidence="1">
    <location>
        <begin position="5"/>
        <end position="242"/>
    </location>
</feature>
<feature type="binding site" evidence="1">
    <location>
        <begin position="37"/>
        <end position="44"/>
    </location>
    <ligand>
        <name>ATP</name>
        <dbReference type="ChEBI" id="CHEBI:30616"/>
    </ligand>
</feature>
<keyword id="KW-0067">ATP-binding</keyword>
<keyword id="KW-0997">Cell inner membrane</keyword>
<keyword id="KW-1003">Cell membrane</keyword>
<keyword id="KW-0472">Membrane</keyword>
<keyword id="KW-0547">Nucleotide-binding</keyword>
<keyword id="KW-1278">Translocase</keyword>
<keyword id="KW-0813">Transport</keyword>
<sequence length="270" mass="28931">MSCFLEAEAATYSVGGATLVDRISLRIEGGELIAIVGPNGAGKSTLLRMLSGDLRPSRGAVRLQQRAVHSYAPRELASRRAMLSQHVSVSFPFTVDEIVQMGAGDRSRAATQSLVDAALHEVGLAEFRDRKLPTLSGGEQQRAHFARVLVQLGCGEAEHGPGLLLLDEPTSSLDLRHQLDLVSTAARCARNGTTVIAILHDLNLAARFADRIVVLHQGALAADGPPDQVIQNSLINRVFDIELAVRMADDGAPFILPQMVKSDDSANRMA</sequence>
<protein>
    <recommendedName>
        <fullName evidence="1">Hemin import ATP-binding protein HmuV</fullName>
        <ecNumber evidence="1">7.6.2.-</ecNumber>
    </recommendedName>
</protein>
<evidence type="ECO:0000255" key="1">
    <source>
        <dbReference type="HAMAP-Rule" id="MF_01718"/>
    </source>
</evidence>